<comment type="function">
    <text evidence="1">Inhibits fibroblast growth factor (FGF)-induced retinal lens fiber differentiation (By similarity). Inhibits TGFB-induced epithelial-to-mesenchymal transition in lens epithelial cells (By similarity).</text>
</comment>
<comment type="subcellular location">
    <subcellularLocation>
        <location>Cytoplasm</location>
    </subcellularLocation>
    <subcellularLocation>
        <location>Membrane</location>
        <topology>Peripheral membrane protein</topology>
    </subcellularLocation>
    <text>Found in the cytoplasm in unstimulated cells but is translocated to the membrane ruffles in cells stimulated with EGF (epidermal growth factor).</text>
</comment>
<comment type="tissue specificity">
    <text>Brain and interlimb region.</text>
</comment>
<comment type="induction">
    <text evidence="3">By FGF signaling.</text>
</comment>
<comment type="domain">
    <text>The Cys-rich domain is responsible for the localization of the protein to the membrane ruffles.</text>
</comment>
<comment type="disease">
    <text>Overexpression during skeletal development causes a severe chondrodysplasia in which cartilage cell differentiation is inhibited.</text>
</comment>
<comment type="similarity">
    <text evidence="4">Belongs to the sprouty family.</text>
</comment>
<organism>
    <name type="scientific">Gallus gallus</name>
    <name type="common">Chicken</name>
    <dbReference type="NCBI Taxonomy" id="9031"/>
    <lineage>
        <taxon>Eukaryota</taxon>
        <taxon>Metazoa</taxon>
        <taxon>Chordata</taxon>
        <taxon>Craniata</taxon>
        <taxon>Vertebrata</taxon>
        <taxon>Euteleostomi</taxon>
        <taxon>Archelosauria</taxon>
        <taxon>Archosauria</taxon>
        <taxon>Dinosauria</taxon>
        <taxon>Saurischia</taxon>
        <taxon>Theropoda</taxon>
        <taxon>Coelurosauria</taxon>
        <taxon>Aves</taxon>
        <taxon>Neognathae</taxon>
        <taxon>Galloanserae</taxon>
        <taxon>Galliformes</taxon>
        <taxon>Phasianidae</taxon>
        <taxon>Phasianinae</taxon>
        <taxon>Gallus</taxon>
    </lineage>
</organism>
<dbReference type="EMBL" id="AF177875">
    <property type="protein sequence ID" value="AAD56008.1"/>
    <property type="molecule type" value="mRNA"/>
</dbReference>
<dbReference type="FunCoup" id="Q9PTL1">
    <property type="interactions" value="169"/>
</dbReference>
<dbReference type="STRING" id="9031.ENSGALP00000051947"/>
<dbReference type="VEuPathDB" id="HostDB:geneid_395583"/>
<dbReference type="InParanoid" id="Q9PTL1"/>
<dbReference type="OrthoDB" id="10038884at2759"/>
<dbReference type="Proteomes" id="UP000000539">
    <property type="component" value="Unassembled WGS sequence"/>
</dbReference>
<dbReference type="GO" id="GO:0005737">
    <property type="term" value="C:cytoplasm"/>
    <property type="evidence" value="ECO:0007669"/>
    <property type="project" value="UniProtKB-SubCell"/>
</dbReference>
<dbReference type="GO" id="GO:0016020">
    <property type="term" value="C:membrane"/>
    <property type="evidence" value="ECO:0007669"/>
    <property type="project" value="UniProtKB-SubCell"/>
</dbReference>
<dbReference type="GO" id="GO:0009966">
    <property type="term" value="P:regulation of signal transduction"/>
    <property type="evidence" value="ECO:0007669"/>
    <property type="project" value="InterPro"/>
</dbReference>
<dbReference type="InterPro" id="IPR007875">
    <property type="entry name" value="Sprouty"/>
</dbReference>
<dbReference type="InterPro" id="IPR051192">
    <property type="entry name" value="Sprouty_domain"/>
</dbReference>
<dbReference type="PANTHER" id="PTHR12365:SF10">
    <property type="entry name" value="PROTEIN SPROUTY HOMOLOG 1"/>
    <property type="match status" value="1"/>
</dbReference>
<dbReference type="PANTHER" id="PTHR12365">
    <property type="entry name" value="SPROUTY"/>
    <property type="match status" value="1"/>
</dbReference>
<dbReference type="Pfam" id="PF05210">
    <property type="entry name" value="Sprouty"/>
    <property type="match status" value="1"/>
</dbReference>
<dbReference type="PROSITE" id="PS51227">
    <property type="entry name" value="SPR"/>
    <property type="match status" value="1"/>
</dbReference>
<reference key="1">
    <citation type="journal article" date="1999" name="Development">
        <title>Vertebrate sprouty genes are induced by FGF signaling and can cause chondrodysplasia when overexpressed.</title>
        <authorList>
            <person name="Minowada G."/>
            <person name="Jarvis L.A."/>
            <person name="Chi C.L."/>
            <person name="Neubueser A."/>
            <person name="Sun X."/>
            <person name="Hacohen N."/>
            <person name="Krasnow M.A."/>
            <person name="Martin G.R."/>
        </authorList>
    </citation>
    <scope>NUCLEOTIDE SEQUENCE [MRNA]</scope>
    <scope>INDUCTION BY FGF</scope>
</reference>
<name>SPY1_CHICK</name>
<protein>
    <recommendedName>
        <fullName>Protein sprouty homolog 1</fullName>
        <shortName>Spry-1</shortName>
    </recommendedName>
</protein>
<proteinExistence type="evidence at transcript level"/>
<sequence length="76" mass="8349">NPCSCSQSHCCSRYLCMGAMSLFLPCLLCYPPAKGCLKLCRGCYDRVNRPGCRCKNSNTVYCKLESCPSRGQGKPS</sequence>
<evidence type="ECO:0000250" key="1">
    <source>
        <dbReference type="UniProtKB" id="Q9QXV9"/>
    </source>
</evidence>
<evidence type="ECO:0000255" key="2">
    <source>
        <dbReference type="PROSITE-ProRule" id="PRU00572"/>
    </source>
</evidence>
<evidence type="ECO:0000269" key="3">
    <source>
    </source>
</evidence>
<evidence type="ECO:0000305" key="4"/>
<keyword id="KW-0963">Cytoplasm</keyword>
<keyword id="KW-0217">Developmental protein</keyword>
<keyword id="KW-0472">Membrane</keyword>
<keyword id="KW-1185">Reference proteome</keyword>
<gene>
    <name type="primary">SPRY1</name>
</gene>
<feature type="chain" id="PRO_0000076900" description="Protein sprouty homolog 1">
    <location>
        <begin position="1" status="less than"/>
        <end position="76"/>
    </location>
</feature>
<feature type="domain" description="SPR" evidence="2">
    <location>
        <begin position="1"/>
        <end position="52"/>
    </location>
</feature>
<feature type="non-terminal residue">
    <location>
        <position position="1"/>
    </location>
</feature>
<accession>Q9PTL1</accession>